<accession>Q9YGI0</accession>
<name>3SO91_BUNMU</name>
<dbReference type="EMBL" id="AJ223250">
    <property type="protein sequence ID" value="CAA11213.1"/>
    <property type="molecule type" value="mRNA"/>
</dbReference>
<dbReference type="SMR" id="Q9YGI0"/>
<dbReference type="GO" id="GO:0005576">
    <property type="term" value="C:extracellular region"/>
    <property type="evidence" value="ECO:0007669"/>
    <property type="project" value="UniProtKB-SubCell"/>
</dbReference>
<dbReference type="GO" id="GO:0090729">
    <property type="term" value="F:toxin activity"/>
    <property type="evidence" value="ECO:0007669"/>
    <property type="project" value="UniProtKB-KW"/>
</dbReference>
<dbReference type="CDD" id="cd00206">
    <property type="entry name" value="TFP_snake_toxin"/>
    <property type="match status" value="1"/>
</dbReference>
<dbReference type="Gene3D" id="2.10.60.10">
    <property type="entry name" value="CD59"/>
    <property type="match status" value="1"/>
</dbReference>
<dbReference type="InterPro" id="IPR003571">
    <property type="entry name" value="Snake_3FTx"/>
</dbReference>
<dbReference type="InterPro" id="IPR045860">
    <property type="entry name" value="Snake_toxin-like_sf"/>
</dbReference>
<dbReference type="InterPro" id="IPR018354">
    <property type="entry name" value="Snake_toxin_con_site"/>
</dbReference>
<dbReference type="InterPro" id="IPR054131">
    <property type="entry name" value="Toxin_cobra-type"/>
</dbReference>
<dbReference type="Pfam" id="PF21947">
    <property type="entry name" value="Toxin_cobra-type"/>
    <property type="match status" value="1"/>
</dbReference>
<dbReference type="SUPFAM" id="SSF57302">
    <property type="entry name" value="Snake toxin-like"/>
    <property type="match status" value="1"/>
</dbReference>
<dbReference type="PROSITE" id="PS00272">
    <property type="entry name" value="SNAKE_TOXIN"/>
    <property type="match status" value="1"/>
</dbReference>
<sequence length="86" mass="9776">MKTLLLSLVVLTIACLDLGYTKTCFNDDLTNPKTTELCRHSMYFCFKNSWIAGGVERIERGCSLTCPDIKYNGKYIYCCTRDNCNA</sequence>
<comment type="subcellular location">
    <subcellularLocation>
        <location evidence="3">Secreted</location>
    </subcellularLocation>
</comment>
<comment type="tissue specificity">
    <text evidence="4">Expressed by the venom gland.</text>
</comment>
<comment type="mass spectrometry" mass="7505.0" method="Electrospray" evidence="2"/>
<comment type="similarity">
    <text evidence="4">Belongs to the three-finger toxin family. Short-chain subfamily. Orphan group IX sub-subfamily.</text>
</comment>
<evidence type="ECO:0000250" key="1">
    <source>
        <dbReference type="UniProtKB" id="P60301"/>
    </source>
</evidence>
<evidence type="ECO:0000269" key="2">
    <source>
    </source>
</evidence>
<evidence type="ECO:0000269" key="3">
    <source>
    </source>
</evidence>
<evidence type="ECO:0000305" key="4"/>
<feature type="signal peptide" evidence="2">
    <location>
        <begin position="1"/>
        <end position="21"/>
    </location>
</feature>
<feature type="chain" id="PRO_0000035424" description="Short neurotoxin homolog NTL1" evidence="2">
    <location>
        <begin position="22"/>
        <end position="86"/>
    </location>
</feature>
<feature type="disulfide bond" evidence="1">
    <location>
        <begin position="24"/>
        <end position="45"/>
    </location>
</feature>
<feature type="disulfide bond" evidence="1">
    <location>
        <begin position="38"/>
        <end position="62"/>
    </location>
</feature>
<feature type="disulfide bond" evidence="1">
    <location>
        <begin position="66"/>
        <end position="78"/>
    </location>
</feature>
<feature type="disulfide bond" evidence="1">
    <location>
        <begin position="79"/>
        <end position="84"/>
    </location>
</feature>
<feature type="sequence conflict" description="In Ref. 2; AA sequence." evidence="4" ref="2">
    <location>
        <position position="71"/>
    </location>
</feature>
<reference key="1">
    <citation type="journal article" date="1998" name="Biochem. Mol. Biol. Int.">
        <title>cDNA cloning and sequence analysis of six neurotoxin-like proteins from Chinese continental banded krait.</title>
        <authorList>
            <person name="Qian Y.-C."/>
            <person name="Fan C.-Y."/>
            <person name="Gong Y."/>
            <person name="Yang S.-L."/>
        </authorList>
    </citation>
    <scope>NUCLEOTIDE SEQUENCE [MRNA]</scope>
    <source>
        <tissue>Venom gland</tissue>
    </source>
</reference>
<reference key="2">
    <citation type="journal article" date="2003" name="Toxicon">
        <title>Novel neurotoxins from Taiwan banded krait (Bungarus multicinctus) venom: purification, characterization and gene organization.</title>
        <authorList>
            <person name="Chang L.-S."/>
            <person name="Chung C."/>
            <person name="Liou J.-C."/>
            <person name="Chang C.-W."/>
            <person name="Yang C.-C."/>
        </authorList>
    </citation>
    <scope>PROTEIN SEQUENCE OF 22-86</scope>
    <scope>MASS SPECTROMETRY</scope>
    <scope>SUBCELLULAR LOCATION</scope>
    <source>
        <tissue>Venom</tissue>
    </source>
</reference>
<organism>
    <name type="scientific">Bungarus multicinctus</name>
    <name type="common">Many-banded krait</name>
    <dbReference type="NCBI Taxonomy" id="8616"/>
    <lineage>
        <taxon>Eukaryota</taxon>
        <taxon>Metazoa</taxon>
        <taxon>Chordata</taxon>
        <taxon>Craniata</taxon>
        <taxon>Vertebrata</taxon>
        <taxon>Euteleostomi</taxon>
        <taxon>Lepidosauria</taxon>
        <taxon>Squamata</taxon>
        <taxon>Bifurcata</taxon>
        <taxon>Unidentata</taxon>
        <taxon>Episquamata</taxon>
        <taxon>Toxicofera</taxon>
        <taxon>Serpentes</taxon>
        <taxon>Colubroidea</taxon>
        <taxon>Elapidae</taxon>
        <taxon>Bungarinae</taxon>
        <taxon>Bungarus</taxon>
    </lineage>
</organism>
<proteinExistence type="evidence at protein level"/>
<protein>
    <recommendedName>
        <fullName>Short neurotoxin homolog NTL1</fullName>
    </recommendedName>
    <alternativeName>
        <fullName>BM10-2</fullName>
    </alternativeName>
</protein>
<keyword id="KW-0903">Direct protein sequencing</keyword>
<keyword id="KW-1015">Disulfide bond</keyword>
<keyword id="KW-0964">Secreted</keyword>
<keyword id="KW-0732">Signal</keyword>
<keyword id="KW-0800">Toxin</keyword>